<organism>
    <name type="scientific">Anemonia viridis</name>
    <name type="common">Snakelocks anemone</name>
    <dbReference type="NCBI Taxonomy" id="51769"/>
    <lineage>
        <taxon>Eukaryota</taxon>
        <taxon>Metazoa</taxon>
        <taxon>Cnidaria</taxon>
        <taxon>Anthozoa</taxon>
        <taxon>Hexacorallia</taxon>
        <taxon>Actiniaria</taxon>
        <taxon>Actiniidae</taxon>
        <taxon>Anemonia</taxon>
    </lineage>
</organism>
<feature type="signal peptide" evidence="2">
    <location>
        <begin position="1"/>
        <end position="20"/>
    </location>
</feature>
<feature type="propeptide" id="PRO_0000433730" evidence="7">
    <location>
        <begin position="21"/>
        <end position="39"/>
    </location>
</feature>
<feature type="chain" id="PRO_0000433731" description="U-actitoxin-Avd9a">
    <location>
        <begin position="42"/>
        <end position="80"/>
    </location>
</feature>
<feature type="domain" description="ShKT" evidence="3">
    <location>
        <begin position="45"/>
        <end position="80"/>
    </location>
</feature>
<feature type="region of interest" description="Crucial for binding to potassium channels" evidence="1">
    <location>
        <begin position="68"/>
        <end position="69"/>
    </location>
</feature>
<feature type="disulfide bond" evidence="3">
    <location>
        <begin position="45"/>
        <end position="80"/>
    </location>
</feature>
<feature type="disulfide bond" evidence="3">
    <location>
        <begin position="54"/>
        <end position="73"/>
    </location>
</feature>
<feature type="disulfide bond" evidence="3">
    <location>
        <begin position="63"/>
        <end position="77"/>
    </location>
</feature>
<feature type="sequence conflict" description="In Ref. 1; FK738108." evidence="6" ref="1">
    <original>T</original>
    <variation>M</variation>
    <location>
        <position position="19"/>
    </location>
</feature>
<sequence>MNLKVLAVFVLCAILVVVTAERRGTETGVYKKDTLQDLIKRTRNCIDRFPTGTCKQVKKGGSCKNSDKYRMNCRKTCGLC</sequence>
<keyword id="KW-1015">Disulfide bond</keyword>
<keyword id="KW-0872">Ion channel impairing toxin</keyword>
<keyword id="KW-0166">Nematocyst</keyword>
<keyword id="KW-0528">Neurotoxin</keyword>
<keyword id="KW-0632">Potassium channel impairing toxin</keyword>
<keyword id="KW-0964">Secreted</keyword>
<keyword id="KW-0732">Signal</keyword>
<keyword id="KW-0800">Toxin</keyword>
<keyword id="KW-1220">Voltage-gated potassium channel impairing toxin</keyword>
<proteinExistence type="inferred from homology"/>
<protein>
    <recommendedName>
        <fullName evidence="5">U-actitoxin-Avd9a</fullName>
        <shortName evidence="5">U-AITX-Avd9a</shortName>
    </recommendedName>
    <alternativeName>
        <fullName evidence="4">Potassium channel toxin avtx-6</fullName>
    </alternativeName>
</protein>
<accession>P0DN00</accession>
<comment type="function">
    <text evidence="1">Inhibits voltage-gated potassium channels (Kv1/KCNA).</text>
</comment>
<comment type="subcellular location">
    <subcellularLocation>
        <location evidence="6">Secreted</location>
    </subcellularLocation>
    <subcellularLocation>
        <location evidence="6">Nematocyst</location>
    </subcellularLocation>
</comment>
<comment type="similarity">
    <text>Belongs to the sea anemone type 1 potassium channel toxin family. Type 1b subfamily.</text>
</comment>
<comment type="caution">
    <text evidence="6">Opinions are divided on whether Anemonia viridis (Forsskal, 1775) and Anemonia sulcata (Pennant, 1777) are separate species.</text>
</comment>
<dbReference type="EMBL" id="FK724096">
    <property type="status" value="NOT_ANNOTATED_CDS"/>
    <property type="molecule type" value="mRNA"/>
</dbReference>
<dbReference type="EMBL" id="FK738108">
    <property type="status" value="NOT_ANNOTATED_CDS"/>
    <property type="molecule type" value="mRNA"/>
</dbReference>
<dbReference type="GO" id="GO:0005576">
    <property type="term" value="C:extracellular region"/>
    <property type="evidence" value="ECO:0007669"/>
    <property type="project" value="UniProtKB-SubCell"/>
</dbReference>
<dbReference type="GO" id="GO:0042151">
    <property type="term" value="C:nematocyst"/>
    <property type="evidence" value="ECO:0007669"/>
    <property type="project" value="UniProtKB-SubCell"/>
</dbReference>
<dbReference type="GO" id="GO:0015459">
    <property type="term" value="F:potassium channel regulator activity"/>
    <property type="evidence" value="ECO:0007669"/>
    <property type="project" value="UniProtKB-KW"/>
</dbReference>
<dbReference type="GO" id="GO:0090729">
    <property type="term" value="F:toxin activity"/>
    <property type="evidence" value="ECO:0007669"/>
    <property type="project" value="UniProtKB-KW"/>
</dbReference>
<dbReference type="Gene3D" id="1.10.10.1940">
    <property type="match status" value="1"/>
</dbReference>
<dbReference type="InterPro" id="IPR003582">
    <property type="entry name" value="ShKT_dom"/>
</dbReference>
<dbReference type="Pfam" id="PF01549">
    <property type="entry name" value="ShK"/>
    <property type="match status" value="1"/>
</dbReference>
<dbReference type="SUPFAM" id="SSF57546">
    <property type="entry name" value="Crisp domain-like"/>
    <property type="match status" value="1"/>
</dbReference>
<dbReference type="PROSITE" id="PS51670">
    <property type="entry name" value="SHKT"/>
    <property type="match status" value="1"/>
</dbReference>
<name>K1B9A_ANEVI</name>
<evidence type="ECO:0000250" key="1">
    <source>
        <dbReference type="UniProtKB" id="P29186"/>
    </source>
</evidence>
<evidence type="ECO:0000255" key="2"/>
<evidence type="ECO:0000255" key="3">
    <source>
        <dbReference type="PROSITE-ProRule" id="PRU01005"/>
    </source>
</evidence>
<evidence type="ECO:0000303" key="4">
    <source>
    </source>
</evidence>
<evidence type="ECO:0000303" key="5">
    <source>
    </source>
</evidence>
<evidence type="ECO:0000305" key="6"/>
<evidence type="ECO:0000305" key="7">
    <source>
    </source>
</evidence>
<reference key="1">
    <citation type="journal article" date="2009" name="BMC Genomics">
        <title>Comprehensive EST analysis of the symbiotic sea anemone, Anemonia viridis.</title>
        <authorList>
            <person name="Sabourault C."/>
            <person name="Ganot P."/>
            <person name="Deleury E."/>
            <person name="Allemand D."/>
            <person name="Furla P."/>
        </authorList>
    </citation>
    <scope>NUCLEOTIDE SEQUENCE [MRNA]</scope>
</reference>
<reference key="2">
    <citation type="journal article" date="2011" name="BMC Genomics">
        <title>The mining of toxin-like polypeptides from EST database by single residue distribution analysis.</title>
        <authorList>
            <person name="Kozlov S."/>
            <person name="Grishin E."/>
        </authorList>
    </citation>
    <scope>NOMENCLATURE</scope>
</reference>
<reference key="3">
    <citation type="journal article" date="2012" name="Toxicon">
        <title>Development of a rational nomenclature for naming peptide and protein toxins from sea anemones.</title>
        <authorList>
            <person name="Oliveira J.S."/>
            <person name="Fuentes-Silva D."/>
            <person name="King G.F."/>
        </authorList>
    </citation>
    <scope>NOMENCLATURE</scope>
</reference>